<feature type="chain" id="PRO_0000082922" description="Methionyl-tRNA formyltransferase">
    <location>
        <begin position="1"/>
        <end position="318"/>
    </location>
</feature>
<feature type="binding site" evidence="1">
    <location>
        <begin position="114"/>
        <end position="117"/>
    </location>
    <ligand>
        <name>(6S)-5,6,7,8-tetrahydrofolate</name>
        <dbReference type="ChEBI" id="CHEBI:57453"/>
    </ligand>
</feature>
<gene>
    <name evidence="1" type="primary">fmt</name>
    <name type="ordered locus">Bd2757</name>
</gene>
<accession>Q6MJL7</accession>
<dbReference type="EC" id="2.1.2.9" evidence="1"/>
<dbReference type="EMBL" id="BX842653">
    <property type="protein sequence ID" value="CAE80543.1"/>
    <property type="molecule type" value="Genomic_DNA"/>
</dbReference>
<dbReference type="RefSeq" id="WP_011165146.1">
    <property type="nucleotide sequence ID" value="NC_005363.1"/>
</dbReference>
<dbReference type="SMR" id="Q6MJL7"/>
<dbReference type="STRING" id="264462.Bd2757"/>
<dbReference type="GeneID" id="93013639"/>
<dbReference type="KEGG" id="bba:Bd2757"/>
<dbReference type="eggNOG" id="COG0223">
    <property type="taxonomic scope" value="Bacteria"/>
</dbReference>
<dbReference type="HOGENOM" id="CLU_033347_1_2_7"/>
<dbReference type="Proteomes" id="UP000008080">
    <property type="component" value="Chromosome"/>
</dbReference>
<dbReference type="GO" id="GO:0005829">
    <property type="term" value="C:cytosol"/>
    <property type="evidence" value="ECO:0007669"/>
    <property type="project" value="TreeGrafter"/>
</dbReference>
<dbReference type="GO" id="GO:0004479">
    <property type="term" value="F:methionyl-tRNA formyltransferase activity"/>
    <property type="evidence" value="ECO:0007669"/>
    <property type="project" value="UniProtKB-UniRule"/>
</dbReference>
<dbReference type="CDD" id="cd08646">
    <property type="entry name" value="FMT_core_Met-tRNA-FMT_N"/>
    <property type="match status" value="1"/>
</dbReference>
<dbReference type="CDD" id="cd08704">
    <property type="entry name" value="Met_tRNA_FMT_C"/>
    <property type="match status" value="1"/>
</dbReference>
<dbReference type="Gene3D" id="3.40.50.12230">
    <property type="match status" value="1"/>
</dbReference>
<dbReference type="HAMAP" id="MF_00182">
    <property type="entry name" value="Formyl_trans"/>
    <property type="match status" value="1"/>
</dbReference>
<dbReference type="InterPro" id="IPR005794">
    <property type="entry name" value="Fmt"/>
</dbReference>
<dbReference type="InterPro" id="IPR005793">
    <property type="entry name" value="Formyl_trans_C"/>
</dbReference>
<dbReference type="InterPro" id="IPR002376">
    <property type="entry name" value="Formyl_transf_N"/>
</dbReference>
<dbReference type="InterPro" id="IPR036477">
    <property type="entry name" value="Formyl_transf_N_sf"/>
</dbReference>
<dbReference type="InterPro" id="IPR011034">
    <property type="entry name" value="Formyl_transferase-like_C_sf"/>
</dbReference>
<dbReference type="InterPro" id="IPR001555">
    <property type="entry name" value="GART_AS"/>
</dbReference>
<dbReference type="InterPro" id="IPR044135">
    <property type="entry name" value="Met-tRNA-FMT_C"/>
</dbReference>
<dbReference type="InterPro" id="IPR041711">
    <property type="entry name" value="Met-tRNA-FMT_N"/>
</dbReference>
<dbReference type="NCBIfam" id="TIGR00460">
    <property type="entry name" value="fmt"/>
    <property type="match status" value="1"/>
</dbReference>
<dbReference type="PANTHER" id="PTHR11138">
    <property type="entry name" value="METHIONYL-TRNA FORMYLTRANSFERASE"/>
    <property type="match status" value="1"/>
</dbReference>
<dbReference type="PANTHER" id="PTHR11138:SF5">
    <property type="entry name" value="METHIONYL-TRNA FORMYLTRANSFERASE, MITOCHONDRIAL"/>
    <property type="match status" value="1"/>
</dbReference>
<dbReference type="Pfam" id="PF02911">
    <property type="entry name" value="Formyl_trans_C"/>
    <property type="match status" value="1"/>
</dbReference>
<dbReference type="Pfam" id="PF00551">
    <property type="entry name" value="Formyl_trans_N"/>
    <property type="match status" value="1"/>
</dbReference>
<dbReference type="SUPFAM" id="SSF50486">
    <property type="entry name" value="FMT C-terminal domain-like"/>
    <property type="match status" value="1"/>
</dbReference>
<dbReference type="SUPFAM" id="SSF53328">
    <property type="entry name" value="Formyltransferase"/>
    <property type="match status" value="1"/>
</dbReference>
<dbReference type="PROSITE" id="PS00373">
    <property type="entry name" value="GART"/>
    <property type="match status" value="1"/>
</dbReference>
<proteinExistence type="inferred from homology"/>
<keyword id="KW-0648">Protein biosynthesis</keyword>
<keyword id="KW-1185">Reference proteome</keyword>
<keyword id="KW-0808">Transferase</keyword>
<reference key="1">
    <citation type="journal article" date="2004" name="Science">
        <title>A predator unmasked: life cycle of Bdellovibrio bacteriovorus from a genomic perspective.</title>
        <authorList>
            <person name="Rendulic S."/>
            <person name="Jagtap P."/>
            <person name="Rosinus A."/>
            <person name="Eppinger M."/>
            <person name="Baar C."/>
            <person name="Lanz C."/>
            <person name="Keller H."/>
            <person name="Lambert C."/>
            <person name="Evans K.J."/>
            <person name="Goesmann A."/>
            <person name="Meyer F."/>
            <person name="Sockett R.E."/>
            <person name="Schuster S.C."/>
        </authorList>
    </citation>
    <scope>NUCLEOTIDE SEQUENCE [LARGE SCALE GENOMIC DNA]</scope>
    <source>
        <strain>ATCC 15356 / DSM 50701 / NCIMB 9529 / HD100</strain>
    </source>
</reference>
<protein>
    <recommendedName>
        <fullName evidence="1">Methionyl-tRNA formyltransferase</fullName>
        <ecNumber evidence="1">2.1.2.9</ecNumber>
    </recommendedName>
</protein>
<organism>
    <name type="scientific">Bdellovibrio bacteriovorus (strain ATCC 15356 / DSM 50701 / NCIMB 9529 / HD100)</name>
    <dbReference type="NCBI Taxonomy" id="264462"/>
    <lineage>
        <taxon>Bacteria</taxon>
        <taxon>Pseudomonadati</taxon>
        <taxon>Bdellovibrionota</taxon>
        <taxon>Bdellovibrionia</taxon>
        <taxon>Bdellovibrionales</taxon>
        <taxon>Pseudobdellovibrionaceae</taxon>
        <taxon>Bdellovibrio</taxon>
    </lineage>
</organism>
<comment type="function">
    <text evidence="1">Attaches a formyl group to the free amino group of methionyl-tRNA(fMet). The formyl group appears to play a dual role in the initiator identity of N-formylmethionyl-tRNA by promoting its recognition by IF2 and preventing the misappropriation of this tRNA by the elongation apparatus.</text>
</comment>
<comment type="catalytic activity">
    <reaction evidence="1">
        <text>L-methionyl-tRNA(fMet) + (6R)-10-formyltetrahydrofolate = N-formyl-L-methionyl-tRNA(fMet) + (6S)-5,6,7,8-tetrahydrofolate + H(+)</text>
        <dbReference type="Rhea" id="RHEA:24380"/>
        <dbReference type="Rhea" id="RHEA-COMP:9952"/>
        <dbReference type="Rhea" id="RHEA-COMP:9953"/>
        <dbReference type="ChEBI" id="CHEBI:15378"/>
        <dbReference type="ChEBI" id="CHEBI:57453"/>
        <dbReference type="ChEBI" id="CHEBI:78530"/>
        <dbReference type="ChEBI" id="CHEBI:78844"/>
        <dbReference type="ChEBI" id="CHEBI:195366"/>
        <dbReference type="EC" id="2.1.2.9"/>
    </reaction>
</comment>
<comment type="similarity">
    <text evidence="1">Belongs to the Fmt family.</text>
</comment>
<sequence length="318" mass="34442">MSKVRVCFLGTPEFAVTSLKALLSDEHFEVVGVVTQPDRPAGRKLQLTPSPVKALAQAHNLKVLAPESLKANPLMLQEIKTWGAEVAVVVAFGQILTQEFLDSFRFGCVNVHGSVLPRWRGAAPIQRAIEAGDVESGVTLQKMVKKLDAGDIIGIRRVKITPDMNALQLHDVLAQLGAELLQVELMDYVRGNLAPTPQDESKVTLAKKIEKMESQIDWSTSAKAIDGKIRGFVYGPGTYTFLQGKKLKLHRATVTRDGGSIGSAKPGTITAVHEDHISVATGDGVLQLFEVQPESRNRMAIADFLKGHALKVGDQLGV</sequence>
<name>FMT_BDEBA</name>
<evidence type="ECO:0000255" key="1">
    <source>
        <dbReference type="HAMAP-Rule" id="MF_00182"/>
    </source>
</evidence>